<gene>
    <name type="primary">BR3</name>
</gene>
<sequence length="1700" mass="186146">MKTLSSLLLVLAVNVLLIQASPDPDNRCPARKYWNERKQACVCKRENRCYPIGAIFDPESCTFSMCQSKGCSAKQIFNKDKCACECRNDQPKDGCGAGRYWCNQDCSCKCSTPMSAGGCSGSQIWCEKSCACVCPNADKCTAPQVWNKDTCCCGCPVNMQEPADGCTKPLIWDKVDCRCECPLKKDCGKNRDWSDSSCSCECKGDGKCQGSKIWCKNNCRCICPTAEPAGGCSAPLKWDDDKCSCACPAKMEEKKEKCVESGKIWNPNTCECGCAQLNCPDNKKANKETCQCECKEVKKCNGGQVFCKDSCSCVCPGGDKDKTCTAPQVYDGVACSCSCPVNMQKPADGCPRPQKWDKEECRCECPVKHDCKNGKVWDETICQCICPRDAPVCTAGKERCGESCECKCINREPKEGCAKPLVWNENTCKCVCPADKQMSPGGCGSGKSFNKLTCQCECDQSASKCGLKRWNADTCKCECQPGMPPEGCGKQTWISDKCKCECSPTITCQAPQILDLNTCECKCPVNMLAQKEKCKSPRQWTDSKCLCECSTTPATCEGKQTWCGEACQCICPGGDKNCGNKKFFDKPSCECKCKNNPTCTSPQVWDADDCECKCPKDKQKPQGGCDGGQKWNDRVCSCGCPVPRPDCTNGQIYNINTCACGCGIDKPSCPKQQIYNWKTCDCECPNGMKEPVGGCGAKTWLDDECQCDCVPGKPKGGCTGAQKWCDKTCKCKCEKEMPTGGCENNKKWCDETCDCVCPQKNTCIAPKVWDAKTCSCICVNPPKCNSPQVLKDTCCCGCQNVKSCKAPQKFIENICDCACPNKKQCKAPLVWSDEFCDCVCPNSASMKTCLSPKEWNKVTCTCDCNPPKPDCCPGTQKWMDDKCKCGCPNAQTDCAGGKKFNDFTCSCGCPSGKLDCTGNTKWSAETCTCGCGDVNRNCGNLKNFNDNLCQCECKNKQEMANCKSPRTWNYDTCKCVCKNADDSDDCVKPQIWLDDQCKCGCPASAQMTCPANKRFIEKSCSCECKSPMPSPIPQGKKWNEDKCVVECANVKTCEGPQRWCDNQCKCICPQVNTKCSDKQKFIESKCECGCETQTQCKDGFRWSNLECGCLCDDKKCPGKQVFDKNTCQCKCPNQKPGDTCGNGKDFCPLDCSCKCKNPKPANGCTGVQEWNEEKCQCECPKDKPKKQCPGGQDWNNHQCQCGCPTPAPTCSNNQKYSNVSCSCGCNPGKPKNGCPGNQIWCDNTCRCVCPKNMEKPADNCKTKWWNDEMCQCVCKPGCPEGGCKGVMKWNANTCSCECPADKAKPASCGDKKSWNDDSCSCQCKSKMPCGGCPPNQQWNEKDCECKCSATGNCPAGQTWNSQTCQCSCPATGKCTGAQVWCSKACKCVCPAQKKCDSPKTWDENSCSCQCPKNMRPPTGGCNAGRTWDDATCSEKCAATPKCDSPKVFDPTTCGCKCGNKPNKLDAGRTWDEQKCKMTCDLPAIPCCHYEGQVYDSNTCKCGCPKEETCKQGFSFSPKSGCKCILECNKKDPGCGAKKIWCQETCKCECASEPPRMGCGPNRYWDKEDCACQCLKTKVCTDSDFSFFSHDTCDCECSNAKDFILNCNQKLNKVSCQPQCIQRPPPEGCAEKFGEFFSWDPKACECKCIEQKTTVKGRVFDKATCNFKCTNEPKTNPKCANTAESWDSQICACKVCSTCKH</sequence>
<evidence type="ECO:0000255" key="1"/>
<protein>
    <recommendedName>
        <fullName>Balbiani ring protein 3</fullName>
    </recommendedName>
</protein>
<accession>Q03376</accession>
<comment type="function">
    <text>Used by the larvae to construct a supramolecular structure, the larval tube. Balbiani ring protein 3 could play a role as a transport protein that binds to other proteins intracellularly and in the gland lumen in order to prevent these from forming water-insoluble fibers too early.</text>
</comment>
<comment type="subcellular location">
    <subcellularLocation>
        <location>Secreted</location>
    </subcellularLocation>
</comment>
<comment type="tissue specificity">
    <text>Salivary gland.</text>
</comment>
<comment type="domain">
    <text>Has 82 approximate repeats of Cys-x-Cys-x-cys.</text>
</comment>
<organism>
    <name type="scientific">Chironomus tentans</name>
    <name type="common">Midge</name>
    <name type="synonym">Camptochironomus tentans</name>
    <dbReference type="NCBI Taxonomy" id="7153"/>
    <lineage>
        <taxon>Eukaryota</taxon>
        <taxon>Metazoa</taxon>
        <taxon>Ecdysozoa</taxon>
        <taxon>Arthropoda</taxon>
        <taxon>Hexapoda</taxon>
        <taxon>Insecta</taxon>
        <taxon>Pterygota</taxon>
        <taxon>Neoptera</taxon>
        <taxon>Endopterygota</taxon>
        <taxon>Diptera</taxon>
        <taxon>Nematocera</taxon>
        <taxon>Chironomoidea</taxon>
        <taxon>Chironomidae</taxon>
        <taxon>Chironominae</taxon>
        <taxon>Chironomus</taxon>
    </lineage>
</organism>
<proteinExistence type="evidence at transcript level"/>
<feature type="signal peptide" evidence="1">
    <location>
        <begin position="1"/>
        <end position="20"/>
    </location>
</feature>
<feature type="chain" id="PRO_0000020792" description="Balbiani ring protein 3">
    <location>
        <begin position="21"/>
        <end position="1700"/>
    </location>
</feature>
<dbReference type="EMBL" id="X52263">
    <property type="protein sequence ID" value="CAA36506.1"/>
    <property type="molecule type" value="mRNA"/>
</dbReference>
<dbReference type="PIR" id="JQ0542">
    <property type="entry name" value="JQ0542"/>
</dbReference>
<dbReference type="PIR" id="S08167">
    <property type="entry name" value="S08167"/>
</dbReference>
<dbReference type="GO" id="GO:0005576">
    <property type="term" value="C:extracellular region"/>
    <property type="evidence" value="ECO:0007669"/>
    <property type="project" value="UniProtKB-SubCell"/>
</dbReference>
<dbReference type="InterPro" id="IPR004153">
    <property type="entry name" value="CXCXC_repeat"/>
</dbReference>
<dbReference type="Pfam" id="PF03128">
    <property type="entry name" value="CXCXC"/>
    <property type="match status" value="10"/>
</dbReference>
<name>BAR3_CHITE</name>
<reference key="1">
    <citation type="journal article" date="1990" name="J. Mol. Biol.">
        <title>The Balbiani ring 3 gene in Chironomus tentans has a diverged repetitive structure split by many introns.</title>
        <authorList>
            <person name="Paulsson G."/>
            <person name="Lendahl U."/>
            <person name="Galli J."/>
            <person name="Ericsson C."/>
            <person name="Wieslander L."/>
        </authorList>
    </citation>
    <scope>NUCLEOTIDE SEQUENCE [MRNA]</scope>
    <source>
        <tissue>Salivary gland</tissue>
    </source>
</reference>
<keyword id="KW-0677">Repeat</keyword>
<keyword id="KW-0964">Secreted</keyword>
<keyword id="KW-0732">Signal</keyword>